<organism>
    <name type="scientific">Mus musculus</name>
    <name type="common">Mouse</name>
    <dbReference type="NCBI Taxonomy" id="10090"/>
    <lineage>
        <taxon>Eukaryota</taxon>
        <taxon>Metazoa</taxon>
        <taxon>Chordata</taxon>
        <taxon>Craniata</taxon>
        <taxon>Vertebrata</taxon>
        <taxon>Euteleostomi</taxon>
        <taxon>Mammalia</taxon>
        <taxon>Eutheria</taxon>
        <taxon>Euarchontoglires</taxon>
        <taxon>Glires</taxon>
        <taxon>Rodentia</taxon>
        <taxon>Myomorpha</taxon>
        <taxon>Muroidea</taxon>
        <taxon>Muridae</taxon>
        <taxon>Murinae</taxon>
        <taxon>Mus</taxon>
        <taxon>Mus</taxon>
    </lineage>
</organism>
<gene>
    <name type="primary">Gpsm2</name>
    <name type="synonym">Lgn</name>
    <name evidence="11" type="synonym">Pins</name>
</gene>
<accession>Q8VDU0</accession>
<accession>Q8BLX3</accession>
<protein>
    <recommendedName>
        <fullName>G-protein-signaling modulator 2</fullName>
    </recommendedName>
    <alternativeName>
        <fullName evidence="11">Pins homolog</fullName>
    </alternativeName>
</protein>
<keyword id="KW-0002">3D-structure</keyword>
<keyword id="KW-0131">Cell cycle</keyword>
<keyword id="KW-0132">Cell division</keyword>
<keyword id="KW-1003">Cell membrane</keyword>
<keyword id="KW-0963">Cytoplasm</keyword>
<keyword id="KW-0206">Cytoskeleton</keyword>
<keyword id="KW-0472">Membrane</keyword>
<keyword id="KW-0498">Mitosis</keyword>
<keyword id="KW-0547">Nucleotide-binding</keyword>
<keyword id="KW-0597">Phosphoprotein</keyword>
<keyword id="KW-1185">Reference proteome</keyword>
<keyword id="KW-0677">Repeat</keyword>
<keyword id="KW-0802">TPR repeat</keyword>
<keyword id="KW-0813">Transport</keyword>
<dbReference type="EMBL" id="AY081187">
    <property type="protein sequence ID" value="AAL87447.1"/>
    <property type="status" value="ALT_INIT"/>
    <property type="molecule type" value="mRNA"/>
</dbReference>
<dbReference type="EMBL" id="BC021308">
    <property type="protein sequence ID" value="AAH21308.1"/>
    <property type="status" value="ALT_INIT"/>
    <property type="molecule type" value="mRNA"/>
</dbReference>
<dbReference type="EMBL" id="AK040996">
    <property type="protein sequence ID" value="BAC30775.1"/>
    <property type="molecule type" value="mRNA"/>
</dbReference>
<dbReference type="CCDS" id="CCDS51048.1"/>
<dbReference type="RefSeq" id="NP_083798.2">
    <property type="nucleotide sequence ID" value="NM_029522.2"/>
</dbReference>
<dbReference type="PDB" id="3RO2">
    <property type="method" value="X-ray"/>
    <property type="resolution" value="2.30 A"/>
    <property type="chains" value="A=22-357"/>
</dbReference>
<dbReference type="PDB" id="3RO3">
    <property type="method" value="X-ray"/>
    <property type="resolution" value="1.10 A"/>
    <property type="chains" value="A=198-357"/>
</dbReference>
<dbReference type="PDB" id="4G2V">
    <property type="method" value="X-ray"/>
    <property type="resolution" value="2.40 A"/>
    <property type="chains" value="A=22-357"/>
</dbReference>
<dbReference type="PDB" id="4G5O">
    <property type="method" value="X-ray"/>
    <property type="resolution" value="2.90 A"/>
    <property type="chains" value="E/F/G/H=628-653"/>
</dbReference>
<dbReference type="PDB" id="4G5Q">
    <property type="method" value="X-ray"/>
    <property type="resolution" value="2.90 A"/>
    <property type="chains" value="E/F/G/H=628-652"/>
</dbReference>
<dbReference type="PDB" id="4G5R">
    <property type="method" value="X-ray"/>
    <property type="resolution" value="3.48 A"/>
    <property type="chains" value="E/F/G/Z=628-652"/>
</dbReference>
<dbReference type="PDB" id="4G5S">
    <property type="method" value="X-ray"/>
    <property type="resolution" value="3.62 A"/>
    <property type="chains" value="E/F/G/Z=594-618"/>
</dbReference>
<dbReference type="PDB" id="4JHR">
    <property type="method" value="X-ray"/>
    <property type="resolution" value="2.80 A"/>
    <property type="chains" value="A/B=96-357, A/B=593-651"/>
</dbReference>
<dbReference type="PDB" id="7EP7">
    <property type="method" value="X-ray"/>
    <property type="resolution" value="2.60 A"/>
    <property type="chains" value="A=22-357"/>
</dbReference>
<dbReference type="PDBsum" id="3RO2"/>
<dbReference type="PDBsum" id="3RO3"/>
<dbReference type="PDBsum" id="4G2V"/>
<dbReference type="PDBsum" id="4G5O"/>
<dbReference type="PDBsum" id="4G5Q"/>
<dbReference type="PDBsum" id="4G5R"/>
<dbReference type="PDBsum" id="4G5S"/>
<dbReference type="PDBsum" id="4JHR"/>
<dbReference type="PDBsum" id="7EP7"/>
<dbReference type="SMR" id="Q8VDU0"/>
<dbReference type="BioGRID" id="217976">
    <property type="interactions" value="5"/>
</dbReference>
<dbReference type="DIP" id="DIP-60164N"/>
<dbReference type="FunCoup" id="Q8VDU0">
    <property type="interactions" value="903"/>
</dbReference>
<dbReference type="IntAct" id="Q8VDU0">
    <property type="interactions" value="5"/>
</dbReference>
<dbReference type="MINT" id="Q8VDU0"/>
<dbReference type="STRING" id="10090.ENSMUSP00000029482"/>
<dbReference type="GlyGen" id="Q8VDU0">
    <property type="glycosylation" value="1 site"/>
</dbReference>
<dbReference type="iPTMnet" id="Q8VDU0"/>
<dbReference type="PhosphoSitePlus" id="Q8VDU0"/>
<dbReference type="PaxDb" id="10090-ENSMUSP00000029482"/>
<dbReference type="ProteomicsDB" id="269623"/>
<dbReference type="Pumba" id="Q8VDU0"/>
<dbReference type="Antibodypedia" id="1983">
    <property type="antibodies" value="195 antibodies from 33 providers"/>
</dbReference>
<dbReference type="DNASU" id="76123"/>
<dbReference type="Ensembl" id="ENSMUST00000029482.16">
    <property type="protein sequence ID" value="ENSMUSP00000029482.9"/>
    <property type="gene ID" value="ENSMUSG00000027883.16"/>
</dbReference>
<dbReference type="GeneID" id="76123"/>
<dbReference type="KEGG" id="mmu:76123"/>
<dbReference type="UCSC" id="uc008qzo.2">
    <property type="organism name" value="mouse"/>
</dbReference>
<dbReference type="AGR" id="MGI:1923373"/>
<dbReference type="CTD" id="29899"/>
<dbReference type="MGI" id="MGI:1923373">
    <property type="gene designation" value="Gpsm2"/>
</dbReference>
<dbReference type="VEuPathDB" id="HostDB:ENSMUSG00000027883"/>
<dbReference type="eggNOG" id="KOG1130">
    <property type="taxonomic scope" value="Eukaryota"/>
</dbReference>
<dbReference type="GeneTree" id="ENSGT00940000161257"/>
<dbReference type="HOGENOM" id="CLU_012445_1_0_1"/>
<dbReference type="InParanoid" id="Q8VDU0"/>
<dbReference type="OMA" id="NQSVLGH"/>
<dbReference type="OrthoDB" id="286233at2759"/>
<dbReference type="PhylomeDB" id="Q8VDU0"/>
<dbReference type="TreeFam" id="TF328344"/>
<dbReference type="Reactome" id="R-MMU-418594">
    <property type="pathway name" value="G alpha (i) signalling events"/>
</dbReference>
<dbReference type="BioGRID-ORCS" id="76123">
    <property type="hits" value="1 hit in 79 CRISPR screens"/>
</dbReference>
<dbReference type="EvolutionaryTrace" id="Q8VDU0"/>
<dbReference type="PRO" id="PR:Q8VDU0"/>
<dbReference type="Proteomes" id="UP000000589">
    <property type="component" value="Chromosome 3"/>
</dbReference>
<dbReference type="RNAct" id="Q8VDU0">
    <property type="molecule type" value="protein"/>
</dbReference>
<dbReference type="Bgee" id="ENSMUSG00000027883">
    <property type="expression patterns" value="Expressed in retinal neural layer and 216 other cell types or tissues"/>
</dbReference>
<dbReference type="ExpressionAtlas" id="Q8VDU0">
    <property type="expression patterns" value="baseline and differential"/>
</dbReference>
<dbReference type="GO" id="GO:0005938">
    <property type="term" value="C:cell cortex"/>
    <property type="evidence" value="ECO:0000250"/>
    <property type="project" value="UniProtKB"/>
</dbReference>
<dbReference type="GO" id="GO:0099738">
    <property type="term" value="C:cell cortex region"/>
    <property type="evidence" value="ECO:0000250"/>
    <property type="project" value="UniProtKB"/>
</dbReference>
<dbReference type="GO" id="GO:0005813">
    <property type="term" value="C:centrosome"/>
    <property type="evidence" value="ECO:0007669"/>
    <property type="project" value="Ensembl"/>
</dbReference>
<dbReference type="GO" id="GO:0005829">
    <property type="term" value="C:cytosol"/>
    <property type="evidence" value="ECO:0007669"/>
    <property type="project" value="Ensembl"/>
</dbReference>
<dbReference type="GO" id="GO:0097575">
    <property type="term" value="C:lateral cell cortex"/>
    <property type="evidence" value="ECO:0000314"/>
    <property type="project" value="UniProtKB"/>
</dbReference>
<dbReference type="GO" id="GO:0016328">
    <property type="term" value="C:lateral plasma membrane"/>
    <property type="evidence" value="ECO:0007669"/>
    <property type="project" value="UniProtKB-SubCell"/>
</dbReference>
<dbReference type="GO" id="GO:0097431">
    <property type="term" value="C:mitotic spindle pole"/>
    <property type="evidence" value="ECO:0007669"/>
    <property type="project" value="Ensembl"/>
</dbReference>
<dbReference type="GO" id="GO:0014069">
    <property type="term" value="C:postsynaptic density"/>
    <property type="evidence" value="ECO:0007669"/>
    <property type="project" value="Ensembl"/>
</dbReference>
<dbReference type="GO" id="GO:0032991">
    <property type="term" value="C:protein-containing complex"/>
    <property type="evidence" value="ECO:0007669"/>
    <property type="project" value="Ensembl"/>
</dbReference>
<dbReference type="GO" id="GO:0070840">
    <property type="term" value="F:dynein complex binding"/>
    <property type="evidence" value="ECO:0000250"/>
    <property type="project" value="UniProtKB"/>
</dbReference>
<dbReference type="GO" id="GO:0001965">
    <property type="term" value="F:G-protein alpha-subunit binding"/>
    <property type="evidence" value="ECO:0000353"/>
    <property type="project" value="UniProtKB"/>
</dbReference>
<dbReference type="GO" id="GO:0005092">
    <property type="term" value="F:GDP-dissociation inhibitor activity"/>
    <property type="evidence" value="ECO:0000314"/>
    <property type="project" value="UniProtKB"/>
</dbReference>
<dbReference type="GO" id="GO:0042802">
    <property type="term" value="F:identical protein binding"/>
    <property type="evidence" value="ECO:0007669"/>
    <property type="project" value="Ensembl"/>
</dbReference>
<dbReference type="GO" id="GO:0000166">
    <property type="term" value="F:nucleotide binding"/>
    <property type="evidence" value="ECO:0007669"/>
    <property type="project" value="UniProtKB-KW"/>
</dbReference>
<dbReference type="GO" id="GO:0019904">
    <property type="term" value="F:protein domain specific binding"/>
    <property type="evidence" value="ECO:0007669"/>
    <property type="project" value="Ensembl"/>
</dbReference>
<dbReference type="GO" id="GO:0051301">
    <property type="term" value="P:cell division"/>
    <property type="evidence" value="ECO:0007669"/>
    <property type="project" value="UniProtKB-KW"/>
</dbReference>
<dbReference type="GO" id="GO:0000132">
    <property type="term" value="P:establishment of mitotic spindle orientation"/>
    <property type="evidence" value="ECO:0000250"/>
    <property type="project" value="UniProtKB"/>
</dbReference>
<dbReference type="GO" id="GO:0051661">
    <property type="term" value="P:maintenance of centrosome location"/>
    <property type="evidence" value="ECO:0000250"/>
    <property type="project" value="UniProtKB"/>
</dbReference>
<dbReference type="GO" id="GO:0007052">
    <property type="term" value="P:mitotic spindle organization"/>
    <property type="evidence" value="ECO:0000250"/>
    <property type="project" value="UniProtKB"/>
</dbReference>
<dbReference type="GO" id="GO:0099645">
    <property type="term" value="P:neurotransmitter receptor localization to postsynaptic specialization membrane"/>
    <property type="evidence" value="ECO:0007669"/>
    <property type="project" value="Ensembl"/>
</dbReference>
<dbReference type="GO" id="GO:1904778">
    <property type="term" value="P:positive regulation of protein localization to cell cortex"/>
    <property type="evidence" value="ECO:0000250"/>
    <property type="project" value="UniProtKB"/>
</dbReference>
<dbReference type="GO" id="GO:1905832">
    <property type="term" value="P:positive regulation of spindle assembly"/>
    <property type="evidence" value="ECO:0000250"/>
    <property type="project" value="UniProtKB"/>
</dbReference>
<dbReference type="GO" id="GO:0060236">
    <property type="term" value="P:regulation of mitotic spindle organization"/>
    <property type="evidence" value="ECO:0000250"/>
    <property type="project" value="UniProtKB"/>
</dbReference>
<dbReference type="GO" id="GO:0009642">
    <property type="term" value="P:response to light intensity"/>
    <property type="evidence" value="ECO:0000315"/>
    <property type="project" value="MGI"/>
</dbReference>
<dbReference type="FunFam" id="1.25.40.10:FF:000192">
    <property type="entry name" value="G-protein-signaling modulator 1 isoform a"/>
    <property type="match status" value="1"/>
</dbReference>
<dbReference type="FunFam" id="1.25.40.10:FF:000043">
    <property type="entry name" value="G-protein-signaling modulator 2 isoform X1"/>
    <property type="match status" value="1"/>
</dbReference>
<dbReference type="Gene3D" id="1.25.40.10">
    <property type="entry name" value="Tetratricopeptide repeat domain"/>
    <property type="match status" value="3"/>
</dbReference>
<dbReference type="InterPro" id="IPR003109">
    <property type="entry name" value="GoLoco_motif"/>
</dbReference>
<dbReference type="InterPro" id="IPR052386">
    <property type="entry name" value="GPSM"/>
</dbReference>
<dbReference type="InterPro" id="IPR011990">
    <property type="entry name" value="TPR-like_helical_dom_sf"/>
</dbReference>
<dbReference type="InterPro" id="IPR019734">
    <property type="entry name" value="TPR_rpt"/>
</dbReference>
<dbReference type="PANTHER" id="PTHR45954:SF3">
    <property type="entry name" value="G-PROTEIN-SIGNALING MODULATOR 2"/>
    <property type="match status" value="1"/>
</dbReference>
<dbReference type="PANTHER" id="PTHR45954">
    <property type="entry name" value="LD33695P"/>
    <property type="match status" value="1"/>
</dbReference>
<dbReference type="Pfam" id="PF02188">
    <property type="entry name" value="GoLoco"/>
    <property type="match status" value="4"/>
</dbReference>
<dbReference type="Pfam" id="PF13374">
    <property type="entry name" value="TPR_10"/>
    <property type="match status" value="1"/>
</dbReference>
<dbReference type="Pfam" id="PF13424">
    <property type="entry name" value="TPR_12"/>
    <property type="match status" value="2"/>
</dbReference>
<dbReference type="Pfam" id="PF13176">
    <property type="entry name" value="TPR_7"/>
    <property type="match status" value="1"/>
</dbReference>
<dbReference type="Pfam" id="PF13181">
    <property type="entry name" value="TPR_8"/>
    <property type="match status" value="1"/>
</dbReference>
<dbReference type="SMART" id="SM00390">
    <property type="entry name" value="GoLoco"/>
    <property type="match status" value="4"/>
</dbReference>
<dbReference type="SMART" id="SM00028">
    <property type="entry name" value="TPR"/>
    <property type="match status" value="7"/>
</dbReference>
<dbReference type="SUPFAM" id="SSF48452">
    <property type="entry name" value="TPR-like"/>
    <property type="match status" value="2"/>
</dbReference>
<dbReference type="PROSITE" id="PS50877">
    <property type="entry name" value="GOLOCO"/>
    <property type="match status" value="4"/>
</dbReference>
<dbReference type="PROSITE" id="PS50005">
    <property type="entry name" value="TPR"/>
    <property type="match status" value="6"/>
</dbReference>
<dbReference type="PROSITE" id="PS50293">
    <property type="entry name" value="TPR_REGION"/>
    <property type="match status" value="2"/>
</dbReference>
<sequence>MEGNLISMREDHSFHVRYRMEASCLELALEGERLCKSGDCRAGVSFFEAAVQVGTEDLKTLSAIYSQLGNAYFYLHDYAKALEYHHHDLTLARTIGDQLGEAKASGNLGNTLKVLGNFDEAIVCCQRHLDISRELNDKVGEARALYNLGNVYHAKGKSFGCPGPQDTGEFPEDVRNALQAAVDLYEENLSLVTALGDRAAQGRAFGNLGNTHYLLGNFRDAVIAHEQRLLIAKEFGDKAAERRAYSNLGNAYIFLGEFETASEYYKKTLLLARQLKDRAVEAQSCYSLGNTYTLLQDYEKAIDYHLKHLAIAQELKDRIGEGRACWSLGNAYTALGNHDQAMHFAEKHLEISREVGDKSGELTARLNLSDLQMVLGLSYSTNNSMMSENIEIDGSLHGAGAKLGRRHSMENLELMKLTPEKVPNWNSEILAKQKPLIAKPSAKLLFVNRLKGKKYKSGSACTKVLQDASNSVDHRAPRSQKKISSDTIGDEGFFDLLRRFQSNRMDDQRCHLQGNCRTTSTAAASATPKLMKAPSVSVVSPNTDEFLDLLASSQSRRLDDQRASFSNLPGLRLTKGNSPSVLERLMTNDKKEPDEDFFDILVKCQGSRLDDQRCAPPSAATKGPTVPDEDFFSLILRSQAKRMDEQRVLLQRDPNRDSEFGLKELLQNNALLEFKHSGK</sequence>
<feature type="chain" id="PRO_0000106359" description="G-protein-signaling modulator 2">
    <location>
        <begin position="1"/>
        <end position="679"/>
    </location>
</feature>
<feature type="repeat" description="TPR 1">
    <location>
        <begin position="24"/>
        <end position="57"/>
    </location>
</feature>
<feature type="repeat" description="TPR 2">
    <location>
        <begin position="62"/>
        <end position="95"/>
    </location>
</feature>
<feature type="repeat" description="TPR 3">
    <location>
        <begin position="102"/>
        <end position="135"/>
    </location>
</feature>
<feature type="repeat" description="TPR 4">
    <location>
        <begin position="142"/>
        <end position="184"/>
    </location>
</feature>
<feature type="repeat" description="TPR 5">
    <location>
        <begin position="202"/>
        <end position="235"/>
    </location>
</feature>
<feature type="repeat" description="TPR 6">
    <location>
        <begin position="242"/>
        <end position="275"/>
    </location>
</feature>
<feature type="repeat" description="TPR 7">
    <location>
        <begin position="282"/>
        <end position="315"/>
    </location>
</feature>
<feature type="repeat" description="TPR 8">
    <location>
        <begin position="322"/>
        <end position="355"/>
    </location>
</feature>
<feature type="domain" description="GoLoco 1" evidence="2">
    <location>
        <begin position="490"/>
        <end position="512"/>
    </location>
</feature>
<feature type="domain" description="GoLoco 2" evidence="2">
    <location>
        <begin position="543"/>
        <end position="565"/>
    </location>
</feature>
<feature type="domain" description="GoLoco 3" evidence="2">
    <location>
        <begin position="594"/>
        <end position="616"/>
    </location>
</feature>
<feature type="domain" description="GoLoco 4" evidence="2">
    <location>
        <begin position="628"/>
        <end position="650"/>
    </location>
</feature>
<feature type="region of interest" description="Important for interaction with NUMA1; INSC and FRMPD1" evidence="5 7">
    <location>
        <begin position="22"/>
        <end position="357"/>
    </location>
</feature>
<feature type="binding site" evidence="6 15">
    <location>
        <position position="608"/>
    </location>
    <ligand>
        <name>GDP</name>
        <dbReference type="ChEBI" id="CHEBI:58189"/>
        <note>ligand shared between dimeric partners</note>
    </ligand>
</feature>
<feature type="binding site" evidence="6 15">
    <location>
        <position position="613"/>
    </location>
    <ligand>
        <name>GDP</name>
        <dbReference type="ChEBI" id="CHEBI:58189"/>
        <note>ligand shared between dimeric partners</note>
    </ligand>
</feature>
<feature type="binding site" evidence="6 13 14">
    <location>
        <position position="642"/>
    </location>
    <ligand>
        <name>GDP</name>
        <dbReference type="ChEBI" id="CHEBI:58189"/>
        <note>ligand shared between dimeric partners</note>
    </ligand>
</feature>
<feature type="binding site" evidence="6 13 14">
    <location>
        <position position="647"/>
    </location>
    <ligand>
        <name>GDP</name>
        <dbReference type="ChEBI" id="CHEBI:58189"/>
        <note>ligand shared between dimeric partners</note>
    </ligand>
</feature>
<feature type="modified residue" description="Phosphoserine" evidence="16 17">
    <location>
        <position position="408"/>
    </location>
</feature>
<feature type="modified residue" description="Phosphoserine" evidence="1">
    <location>
        <position position="484"/>
    </location>
</feature>
<feature type="modified residue" description="Phosphothreonine" evidence="1">
    <location>
        <position position="487"/>
    </location>
</feature>
<feature type="modified residue" description="Phosphoserine" evidence="1">
    <location>
        <position position="540"/>
    </location>
</feature>
<feature type="modified residue" description="Phosphoserine" evidence="16">
    <location>
        <position position="564"/>
    </location>
</feature>
<feature type="mutagenesis site" description="Nearly abolishes interaction with NUMA1." evidence="5">
    <original>N</original>
    <variation>F</variation>
    <location>
        <position position="210"/>
    </location>
</feature>
<feature type="mutagenesis site" description="Abolishes interaction with NUMA1; when associated with A-243. Abolishes interaction with FRMPD1; when associated with A-243." evidence="5 7">
    <original>R</original>
    <variation>A</variation>
    <location>
        <position position="228"/>
    </location>
</feature>
<feature type="mutagenesis site" description="Abolishes interaction with NUMA1; when associated with A-228. Abolishes interaction with FRMPD1; when associated with A-228." evidence="5 7">
    <original>R</original>
    <variation>A</variation>
    <location>
        <position position="243"/>
    </location>
</feature>
<feature type="mutagenesis site" description="Abolishes interaction with INSC." evidence="5">
    <original>F</original>
    <variation>E</variation>
    <location>
        <position position="254"/>
    </location>
</feature>
<feature type="mutagenesis site" description="Abolishes interaction with INSC." evidence="5">
    <original>N</original>
    <variation>E</variation>
    <location>
        <position position="290"/>
    </location>
</feature>
<feature type="mutagenesis site" description="Disrupts one GNAI3 binding site." evidence="6">
    <original>L</original>
    <variation>E</variation>
    <location>
        <position position="601"/>
    </location>
</feature>
<feature type="mutagenesis site" description="Disrupts one GNAI3 binding site." evidence="6">
    <original>I</original>
    <variation>E</variation>
    <location>
        <position position="635"/>
    </location>
</feature>
<feature type="mutagenesis site" description="Reduces affinity for GDP-bound GNAI3 50-fold. Reduces affinity for GDP-bound GNAI3 500-fold; when associated with A-647." evidence="6">
    <original>R</original>
    <variation>A</variation>
    <variation>G</variation>
    <location>
        <position position="642"/>
    </location>
</feature>
<feature type="mutagenesis site" description="Reduces affinity for GDP-bound GNAI3 500-fold; when associated with A-642." evidence="6">
    <original>R</original>
    <variation>A</variation>
    <location>
        <position position="647"/>
    </location>
</feature>
<feature type="helix" evidence="18">
    <location>
        <begin position="22"/>
        <end position="36"/>
    </location>
</feature>
<feature type="helix" evidence="18">
    <location>
        <begin position="40"/>
        <end position="53"/>
    </location>
</feature>
<feature type="helix" evidence="18">
    <location>
        <begin position="58"/>
        <end position="74"/>
    </location>
</feature>
<feature type="helix" evidence="18">
    <location>
        <begin position="78"/>
        <end position="95"/>
    </location>
</feature>
<feature type="helix" evidence="18">
    <location>
        <begin position="98"/>
        <end position="114"/>
    </location>
</feature>
<feature type="helix" evidence="18">
    <location>
        <begin position="118"/>
        <end position="134"/>
    </location>
</feature>
<feature type="helix" evidence="18">
    <location>
        <begin position="138"/>
        <end position="157"/>
    </location>
</feature>
<feature type="strand" evidence="18">
    <location>
        <begin position="159"/>
        <end position="163"/>
    </location>
</feature>
<feature type="helix" evidence="18">
    <location>
        <begin position="172"/>
        <end position="195"/>
    </location>
</feature>
<feature type="helix" evidence="19">
    <location>
        <begin position="198"/>
        <end position="214"/>
    </location>
</feature>
<feature type="helix" evidence="19">
    <location>
        <begin position="218"/>
        <end position="235"/>
    </location>
</feature>
<feature type="helix" evidence="19">
    <location>
        <begin position="238"/>
        <end position="254"/>
    </location>
</feature>
<feature type="helix" evidence="19">
    <location>
        <begin position="258"/>
        <end position="274"/>
    </location>
</feature>
<feature type="helix" evidence="19">
    <location>
        <begin position="278"/>
        <end position="294"/>
    </location>
</feature>
<feature type="helix" evidence="19">
    <location>
        <begin position="298"/>
        <end position="314"/>
    </location>
</feature>
<feature type="helix" evidence="19">
    <location>
        <begin position="318"/>
        <end position="335"/>
    </location>
</feature>
<feature type="helix" evidence="19">
    <location>
        <begin position="338"/>
        <end position="352"/>
    </location>
</feature>
<feature type="helix" evidence="20">
    <location>
        <begin position="598"/>
        <end position="601"/>
    </location>
</feature>
<feature type="turn" evidence="20">
    <location>
        <begin position="617"/>
        <end position="619"/>
    </location>
</feature>
<feature type="helix" evidence="20">
    <location>
        <begin position="632"/>
        <end position="646"/>
    </location>
</feature>
<reference key="1">
    <citation type="journal article" date="2003" name="J. Cell Sci.">
        <title>A mouse homologue of Drosophila pins can asymmetrically localize and substitute for pins function in Drosophila neuroblasts.</title>
        <authorList>
            <person name="Yu F."/>
            <person name="Morin X."/>
            <person name="Kaushik R."/>
            <person name="Bahri S."/>
            <person name="Yang X."/>
            <person name="Chia W."/>
        </authorList>
    </citation>
    <scope>NUCLEOTIDE SEQUENCE [MRNA]</scope>
    <scope>FUNCTION</scope>
    <scope>TISSUE SPECIFICITY</scope>
    <source>
        <strain>C57BL/6J</strain>
    </source>
</reference>
<reference key="2">
    <citation type="journal article" date="2004" name="Genome Res.">
        <title>The status, quality, and expansion of the NIH full-length cDNA project: the Mammalian Gene Collection (MGC).</title>
        <authorList>
            <consortium name="The MGC Project Team"/>
        </authorList>
    </citation>
    <scope>NUCLEOTIDE SEQUENCE [LARGE SCALE MRNA]</scope>
    <source>
        <strain>FVB/N-3</strain>
        <tissue>Mammary tumor</tissue>
    </source>
</reference>
<reference key="3">
    <citation type="journal article" date="2005" name="Science">
        <title>The transcriptional landscape of the mammalian genome.</title>
        <authorList>
            <person name="Carninci P."/>
            <person name="Kasukawa T."/>
            <person name="Katayama S."/>
            <person name="Gough J."/>
            <person name="Frith M.C."/>
            <person name="Maeda N."/>
            <person name="Oyama R."/>
            <person name="Ravasi T."/>
            <person name="Lenhard B."/>
            <person name="Wells C."/>
            <person name="Kodzius R."/>
            <person name="Shimokawa K."/>
            <person name="Bajic V.B."/>
            <person name="Brenner S.E."/>
            <person name="Batalov S."/>
            <person name="Forrest A.R."/>
            <person name="Zavolan M."/>
            <person name="Davis M.J."/>
            <person name="Wilming L.G."/>
            <person name="Aidinis V."/>
            <person name="Allen J.E."/>
            <person name="Ambesi-Impiombato A."/>
            <person name="Apweiler R."/>
            <person name="Aturaliya R.N."/>
            <person name="Bailey T.L."/>
            <person name="Bansal M."/>
            <person name="Baxter L."/>
            <person name="Beisel K.W."/>
            <person name="Bersano T."/>
            <person name="Bono H."/>
            <person name="Chalk A.M."/>
            <person name="Chiu K.P."/>
            <person name="Choudhary V."/>
            <person name="Christoffels A."/>
            <person name="Clutterbuck D.R."/>
            <person name="Crowe M.L."/>
            <person name="Dalla E."/>
            <person name="Dalrymple B.P."/>
            <person name="de Bono B."/>
            <person name="Della Gatta G."/>
            <person name="di Bernardo D."/>
            <person name="Down T."/>
            <person name="Engstrom P."/>
            <person name="Fagiolini M."/>
            <person name="Faulkner G."/>
            <person name="Fletcher C.F."/>
            <person name="Fukushima T."/>
            <person name="Furuno M."/>
            <person name="Futaki S."/>
            <person name="Gariboldi M."/>
            <person name="Georgii-Hemming P."/>
            <person name="Gingeras T.R."/>
            <person name="Gojobori T."/>
            <person name="Green R.E."/>
            <person name="Gustincich S."/>
            <person name="Harbers M."/>
            <person name="Hayashi Y."/>
            <person name="Hensch T.K."/>
            <person name="Hirokawa N."/>
            <person name="Hill D."/>
            <person name="Huminiecki L."/>
            <person name="Iacono M."/>
            <person name="Ikeo K."/>
            <person name="Iwama A."/>
            <person name="Ishikawa T."/>
            <person name="Jakt M."/>
            <person name="Kanapin A."/>
            <person name="Katoh M."/>
            <person name="Kawasawa Y."/>
            <person name="Kelso J."/>
            <person name="Kitamura H."/>
            <person name="Kitano H."/>
            <person name="Kollias G."/>
            <person name="Krishnan S.P."/>
            <person name="Kruger A."/>
            <person name="Kummerfeld S.K."/>
            <person name="Kurochkin I.V."/>
            <person name="Lareau L.F."/>
            <person name="Lazarevic D."/>
            <person name="Lipovich L."/>
            <person name="Liu J."/>
            <person name="Liuni S."/>
            <person name="McWilliam S."/>
            <person name="Madan Babu M."/>
            <person name="Madera M."/>
            <person name="Marchionni L."/>
            <person name="Matsuda H."/>
            <person name="Matsuzawa S."/>
            <person name="Miki H."/>
            <person name="Mignone F."/>
            <person name="Miyake S."/>
            <person name="Morris K."/>
            <person name="Mottagui-Tabar S."/>
            <person name="Mulder N."/>
            <person name="Nakano N."/>
            <person name="Nakauchi H."/>
            <person name="Ng P."/>
            <person name="Nilsson R."/>
            <person name="Nishiguchi S."/>
            <person name="Nishikawa S."/>
            <person name="Nori F."/>
            <person name="Ohara O."/>
            <person name="Okazaki Y."/>
            <person name="Orlando V."/>
            <person name="Pang K.C."/>
            <person name="Pavan W.J."/>
            <person name="Pavesi G."/>
            <person name="Pesole G."/>
            <person name="Petrovsky N."/>
            <person name="Piazza S."/>
            <person name="Reed J."/>
            <person name="Reid J.F."/>
            <person name="Ring B.Z."/>
            <person name="Ringwald M."/>
            <person name="Rost B."/>
            <person name="Ruan Y."/>
            <person name="Salzberg S.L."/>
            <person name="Sandelin A."/>
            <person name="Schneider C."/>
            <person name="Schoenbach C."/>
            <person name="Sekiguchi K."/>
            <person name="Semple C.A."/>
            <person name="Seno S."/>
            <person name="Sessa L."/>
            <person name="Sheng Y."/>
            <person name="Shibata Y."/>
            <person name="Shimada H."/>
            <person name="Shimada K."/>
            <person name="Silva D."/>
            <person name="Sinclair B."/>
            <person name="Sperling S."/>
            <person name="Stupka E."/>
            <person name="Sugiura K."/>
            <person name="Sultana R."/>
            <person name="Takenaka Y."/>
            <person name="Taki K."/>
            <person name="Tammoja K."/>
            <person name="Tan S.L."/>
            <person name="Tang S."/>
            <person name="Taylor M.S."/>
            <person name="Tegner J."/>
            <person name="Teichmann S.A."/>
            <person name="Ueda H.R."/>
            <person name="van Nimwegen E."/>
            <person name="Verardo R."/>
            <person name="Wei C.L."/>
            <person name="Yagi K."/>
            <person name="Yamanishi H."/>
            <person name="Zabarovsky E."/>
            <person name="Zhu S."/>
            <person name="Zimmer A."/>
            <person name="Hide W."/>
            <person name="Bult C."/>
            <person name="Grimmond S.M."/>
            <person name="Teasdale R.D."/>
            <person name="Liu E.T."/>
            <person name="Brusic V."/>
            <person name="Quackenbush J."/>
            <person name="Wahlestedt C."/>
            <person name="Mattick J.S."/>
            <person name="Hume D.A."/>
            <person name="Kai C."/>
            <person name="Sasaki D."/>
            <person name="Tomaru Y."/>
            <person name="Fukuda S."/>
            <person name="Kanamori-Katayama M."/>
            <person name="Suzuki M."/>
            <person name="Aoki J."/>
            <person name="Arakawa T."/>
            <person name="Iida J."/>
            <person name="Imamura K."/>
            <person name="Itoh M."/>
            <person name="Kato T."/>
            <person name="Kawaji H."/>
            <person name="Kawagashira N."/>
            <person name="Kawashima T."/>
            <person name="Kojima M."/>
            <person name="Kondo S."/>
            <person name="Konno H."/>
            <person name="Nakano K."/>
            <person name="Ninomiya N."/>
            <person name="Nishio T."/>
            <person name="Okada M."/>
            <person name="Plessy C."/>
            <person name="Shibata K."/>
            <person name="Shiraki T."/>
            <person name="Suzuki S."/>
            <person name="Tagami M."/>
            <person name="Waki K."/>
            <person name="Watahiki A."/>
            <person name="Okamura-Oho Y."/>
            <person name="Suzuki H."/>
            <person name="Kawai J."/>
            <person name="Hayashizaki Y."/>
        </authorList>
    </citation>
    <scope>NUCLEOTIDE SEQUENCE [LARGE SCALE MRNA] OF 1-640</scope>
    <source>
        <strain>C57BL/6J</strain>
        <tissue>Aorta</tissue>
        <tissue>Vein</tissue>
    </source>
</reference>
<reference key="4">
    <citation type="journal article" date="2005" name="Nature">
        <title>Asymmetric cell divisions promote stratification and differentiation of mammalian skin.</title>
        <authorList>
            <person name="Lechler T."/>
            <person name="Fuchs E."/>
        </authorList>
    </citation>
    <scope>INTERACTION WITH INSC AND F2RL2</scope>
    <source>
        <strain>CD-1</strain>
        <tissue>Epidermis</tissue>
    </source>
</reference>
<reference key="5">
    <citation type="journal article" date="2009" name="Immunity">
        <title>The phagosomal proteome in interferon-gamma-activated macrophages.</title>
        <authorList>
            <person name="Trost M."/>
            <person name="English L."/>
            <person name="Lemieux S."/>
            <person name="Courcelles M."/>
            <person name="Desjardins M."/>
            <person name="Thibault P."/>
        </authorList>
    </citation>
    <scope>PHOSPHORYLATION [LARGE SCALE ANALYSIS] AT SER-408 AND SER-564</scope>
    <scope>IDENTIFICATION BY MASS SPECTROMETRY [LARGE SCALE ANALYSIS]</scope>
</reference>
<reference key="6">
    <citation type="journal article" date="2010" name="Cell">
        <title>A tissue-specific atlas of mouse protein phosphorylation and expression.</title>
        <authorList>
            <person name="Huttlin E.L."/>
            <person name="Jedrychowski M.P."/>
            <person name="Elias J.E."/>
            <person name="Goswami T."/>
            <person name="Rad R."/>
            <person name="Beausoleil S.A."/>
            <person name="Villen J."/>
            <person name="Haas W."/>
            <person name="Sowa M.E."/>
            <person name="Gygi S.P."/>
        </authorList>
    </citation>
    <scope>PHOSPHORYLATION [LARGE SCALE ANALYSIS] AT SER-408</scope>
    <scope>IDENTIFICATION BY MASS SPECTROMETRY [LARGE SCALE ANALYSIS]</scope>
    <source>
        <tissue>Brain</tissue>
        <tissue>Heart</tissue>
        <tissue>Lung</tissue>
        <tissue>Spleen</tissue>
    </source>
</reference>
<reference key="7">
    <citation type="journal article" date="2016" name="Dev. Cell">
        <title>SAPCD2 controls spindle orientation and asymmetric divisions by negatively regulating the Galphai-LGN-NuMA ternary complex.</title>
        <authorList>
            <person name="Chiu C.W."/>
            <person name="Monat C."/>
            <person name="Robitaille M."/>
            <person name="Lacomme M."/>
            <person name="Daulat A.M."/>
            <person name="Macleod G."/>
            <person name="McNeill H."/>
            <person name="Cayouette M."/>
            <person name="Angers S."/>
        </authorList>
    </citation>
    <scope>SUBCELLULAR LOCATION</scope>
</reference>
<reference key="8">
    <citation type="journal article" date="2019" name="Exp. Cell Res.">
        <title>Fam208a orchestrates interaction protein network essential for early embryonic development and cell division.</title>
        <authorList>
            <person name="Gresakova V."/>
            <person name="Novosadova V."/>
            <person name="Prochazkova M."/>
            <person name="Bhargava S."/>
            <person name="Jenickova I."/>
            <person name="Prochazka J."/>
            <person name="Sedlacek R."/>
        </authorList>
    </citation>
    <scope>INTERACTION WITH TASOR</scope>
    <scope>TISSUE SPECIFICITY</scope>
</reference>
<reference key="9">
    <citation type="journal article" date="2011" name="Mol. Cell">
        <title>LGN/mInsc and LGN/NuMA complex structures suggest distinct functions in asymmetric cell division for the Par3/mInsc/LGN and Galphai/LGN/NuMA pathways.</title>
        <authorList>
            <person name="Zhu J."/>
            <person name="Wen W."/>
            <person name="Zheng Z."/>
            <person name="Shang Y."/>
            <person name="Wei Z."/>
            <person name="Xiao Z."/>
            <person name="Pan Z."/>
            <person name="Du Q."/>
            <person name="Wang W."/>
            <person name="Zhang M."/>
        </authorList>
    </citation>
    <scope>X-RAY CRYSTALLOGRAPHY (1.10 ANGSTROMS) OF 198-357 IN COMPLEXES WITH NUMA1 AND INSC</scope>
    <scope>INTERACTION WITH NUMA1 AND INSC</scope>
    <scope>MUTAGENESIS OF ASN-210; ARG-228; ARG-243; PHE-254 AND ASN-290</scope>
</reference>
<reference key="10">
    <citation type="journal article" date="2012" name="J. Biol. Chem.">
        <title>Crystal structures of the scaffolding protein LGN reveal the general mechanism by which GoLoco binding motifs inhibit the release of GDP from Galphai.</title>
        <authorList>
            <person name="Jia M."/>
            <person name="Li J."/>
            <person name="Zhu J."/>
            <person name="Wen W."/>
            <person name="Zhang M."/>
            <person name="Wang W."/>
        </authorList>
    </citation>
    <scope>X-RAY CRYSTALLOGRAPHY (2.90 ANGSTROMS) OF 594-618 AND 628-652 IN COMPLEXES WITH GNAI1; GNAI3 AND GDP</scope>
    <scope>INTERACTION WITH GNAI1 AND GNAI3</scope>
    <scope>DOMAIN</scope>
    <scope>MUTAGENESIS OF LEU-601; ILE-635; ARG-642 AND ARG-647</scope>
</reference>
<reference key="11">
    <citation type="journal article" date="2013" name="J. Mol. Biol.">
        <title>Structural and biochemical characterization of the interaction between LGN and Frmpd1.</title>
        <authorList>
            <person name="Pan Z."/>
            <person name="Shang Y."/>
            <person name="Jia M."/>
            <person name="Zhang L."/>
            <person name="Xia C."/>
            <person name="Zhang M."/>
            <person name="Wang W."/>
            <person name="Wen W."/>
        </authorList>
    </citation>
    <scope>X-RAY CRYSTALLOGRAPHY (2.40 ANGSTROMS) OF 22-357 IN COMPLEX WITH FRMPD1</scope>
    <scope>INTERACTION WITH FRMPD1 AND NUMA1</scope>
    <scope>MUTAGENESIS OF ARG-228 AND ARG-243</scope>
</reference>
<reference key="12">
    <citation type="journal article" date="2013" name="Structure">
        <title>An autoinhibited conformation of LGN reveals a distinct interaction mode between GoLoco motifs and TPR motifs.</title>
        <authorList>
            <person name="Pan Z."/>
            <person name="Zhu J."/>
            <person name="Shang Y."/>
            <person name="Wei Z."/>
            <person name="Jia M."/>
            <person name="Xia C."/>
            <person name="Wen W."/>
            <person name="Wang W."/>
            <person name="Zhang M."/>
        </authorList>
    </citation>
    <scope>X-RAY CRYSTALLOGRAPHY (2.80 ANGSTROMS) OF 96-357 AND 593-651 IN COMPLEXES WITH GNAI1 AND GNAI3</scope>
    <scope>INTERACTION WITH NUMA1; GNAI1 AND GNAI3</scope>
    <scope>DOMAIN</scope>
</reference>
<evidence type="ECO:0000250" key="1">
    <source>
        <dbReference type="UniProtKB" id="P81274"/>
    </source>
</evidence>
<evidence type="ECO:0000255" key="2">
    <source>
        <dbReference type="PROSITE-ProRule" id="PRU00097"/>
    </source>
</evidence>
<evidence type="ECO:0000269" key="3">
    <source>
    </source>
</evidence>
<evidence type="ECO:0000269" key="4">
    <source>
    </source>
</evidence>
<evidence type="ECO:0000269" key="5">
    <source>
    </source>
</evidence>
<evidence type="ECO:0000269" key="6">
    <source>
    </source>
</evidence>
<evidence type="ECO:0000269" key="7">
    <source>
    </source>
</evidence>
<evidence type="ECO:0000269" key="8">
    <source>
    </source>
</evidence>
<evidence type="ECO:0000269" key="9">
    <source>
    </source>
</evidence>
<evidence type="ECO:0000269" key="10">
    <source>
    </source>
</evidence>
<evidence type="ECO:0000303" key="11">
    <source>
    </source>
</evidence>
<evidence type="ECO:0000305" key="12"/>
<evidence type="ECO:0007744" key="13">
    <source>
        <dbReference type="PDB" id="4G5O"/>
    </source>
</evidence>
<evidence type="ECO:0007744" key="14">
    <source>
        <dbReference type="PDB" id="4G5Q"/>
    </source>
</evidence>
<evidence type="ECO:0007744" key="15">
    <source>
        <dbReference type="PDB" id="4G5S"/>
    </source>
</evidence>
<evidence type="ECO:0007744" key="16">
    <source>
    </source>
</evidence>
<evidence type="ECO:0007744" key="17">
    <source>
    </source>
</evidence>
<evidence type="ECO:0007829" key="18">
    <source>
        <dbReference type="PDB" id="3RO2"/>
    </source>
</evidence>
<evidence type="ECO:0007829" key="19">
    <source>
        <dbReference type="PDB" id="3RO3"/>
    </source>
</evidence>
<evidence type="ECO:0007829" key="20">
    <source>
        <dbReference type="PDB" id="4JHR"/>
    </source>
</evidence>
<name>GPSM2_MOUSE</name>
<proteinExistence type="evidence at protein level"/>
<comment type="function">
    <text evidence="1 3 5 6">Plays an important role in mitotic spindle pole organization via its interaction with NUMA1 (PubMed:21816348). Required for cortical dynein-dynactin complex recruitment during metaphase (By similarity). Plays a role in metaphase spindle orientation (By similarity). Plays an important role in asymmetric cell divisions (PubMed:12571286, PubMed:21816348). Has guanine nucleotide dissociation inhibitor (GDI) activity towards G(i) alpha proteins, such as GNAI1 and GNAI3, and thereby regulates their activity (PubMed:22952234).</text>
</comment>
<comment type="subunit">
    <text evidence="1 4 5 6 7 8 10">Interacts with the dynein-dynactin complex; this interaction is inhibited in a PLK1-dependent manner (By similarity). Part of a spindle orientation complex at least composed of GNAI1, GPSM2 and NUMA1 (By similarity). Interacts with LLGL2 (By similarity). Interacts (via TPR repeat region) with INSC/inscuteable (PubMed:16094321, PubMed:21816348). Interacts (via TPR repeat region) with NUMA1 (via C-terminus); this interaction is direct, inhibited in a PLK1-dependent manner and promotes spindle pole organization (PubMed:21816348, PubMed:23318951, PubMed:23665171). INSC and NUMA1 compete for the same binding site, but INSC has higher affinity and can displace NUMA1 (in vitro) (PubMed:21816348). Interacts with GNAI2 (By similarity). Interacts (via GoLoco domains) with the GDP-bound form of GNAI1 and GNAI3; has much lower affinity for the GTP-bound form (PubMed:22952234, PubMed:23665171). Interaction with GDP-bound GNAI3 strongly enhances the affinity for NUMA1 (PubMed:23665171). Interacts (via TPR repeat region) with FRMPD1 (PubMed:23318951). INSC and FRMPD1 compete for the same binding site, but INSC has higher affinity and can displace FRMPD1 (in vitro) (PubMed:23318951). Interacts (via TPR repeat region) with FRMPD4. Identified in a complex with INSC and F2RL2/Par3 (By similarity). Interacts with TASOR (PubMed:31112734).</text>
</comment>
<comment type="interaction">
    <interactant intactId="EBI-7575403">
        <id>Q8VDU0</id>
    </interactant>
    <interactant intactId="EBI-389325">
        <id>Q62696</id>
        <label>Dlg1</label>
    </interactant>
    <organismsDiffer>true</organismsDiffer>
    <experiments>7</experiments>
</comment>
<comment type="interaction">
    <interactant intactId="EBI-7575403">
        <id>Q8VDU0</id>
    </interactant>
    <interactant intactId="EBI-80389">
        <id>P78352</id>
        <label>DLG4</label>
    </interactant>
    <organismsDiffer>true</organismsDiffer>
    <experiments>7</experiments>
</comment>
<comment type="interaction">
    <interactant intactId="EBI-7575403">
        <id>Q8VDU0</id>
    </interactant>
    <interactant intactId="EBI-10981450">
        <id>Q14980-2</id>
        <label>NUMA1</label>
    </interactant>
    <organismsDiffer>true</organismsDiffer>
    <experiments>2</experiments>
</comment>
<comment type="subcellular location">
    <subcellularLocation>
        <location evidence="1">Cytoplasm</location>
    </subcellularLocation>
    <subcellularLocation>
        <location evidence="9">Cytoplasm</location>
        <location evidence="9">Cell cortex</location>
    </subcellularLocation>
    <subcellularLocation>
        <location evidence="1">Cytoplasm</location>
        <location evidence="1">Cytoskeleton</location>
        <location evidence="1">Spindle pole</location>
    </subcellularLocation>
    <subcellularLocation>
        <location evidence="9">Lateral cell membrane</location>
    </subcellularLocation>
    <text evidence="1 9">Localizes in the cytoplasm during interphase and at cell cortex during metaphase. Colocalizes with NUMA1 to mitotic spindle poles. Localized at the central and lateral cell cortex regions in a RanGTP-dependent manner (By similarity). In horizontally retinal progenitor dividing cells, localized to the lateral cortical region (PubMed:26766442). In vertically retinal progenitor dividing cells, localized at the polar cortical region (PubMed:26766442).</text>
</comment>
<comment type="tissue specificity">
    <text evidence="3 10">Detected in brain and liver (at protein level). Detected in brain, spleen, liver and testis, and at lower levels in heart, lung and kidney. Enriched in the ventricular zone of the developing central nervous systems (PubMed:12571286). Expressed in proximal colon, ileum, ovary, Sertoli cells of the testis and granular cells within the cerebellum (PubMed:31112734).</text>
</comment>
<comment type="domain">
    <text evidence="6 8">Each GoLoco domain can bind one GNAI3 (PubMed:22952234). In the auto-inhibited conformation, the GoLoco domains interact with the TPR repeat region (PubMed:23665171).</text>
</comment>
<comment type="similarity">
    <text evidence="12">Belongs to the GPSM family.</text>
</comment>
<comment type="caution">
    <text evidence="12">It is uncertain whether Met-1 or Met-8 is the initiator.</text>
</comment>
<comment type="sequence caution" evidence="12">
    <conflict type="erroneous initiation">
        <sequence resource="EMBL-CDS" id="AAH21308"/>
    </conflict>
    <text>Truncated N-terminus.</text>
</comment>
<comment type="sequence caution" evidence="12">
    <conflict type="erroneous initiation">
        <sequence resource="EMBL-CDS" id="AAL87447"/>
    </conflict>
    <text>Truncated N-terminus.</text>
</comment>